<feature type="chain" id="PRO_1000007364" description="Large ribosomal subunit protein bL28">
    <location>
        <begin position="1"/>
        <end position="62"/>
    </location>
</feature>
<feature type="region of interest" description="Disordered" evidence="2">
    <location>
        <begin position="1"/>
        <end position="22"/>
    </location>
</feature>
<sequence length="62" mass="6977">MGKQCFVTGRKASTGNRRSHALNSTKRRWNANLQKVRILVDGKPKKVWVSARALKSGKVTRV</sequence>
<dbReference type="EMBL" id="AP009324">
    <property type="protein sequence ID" value="BAF78097.1"/>
    <property type="molecule type" value="Genomic_DNA"/>
</dbReference>
<dbReference type="RefSeq" id="WP_000517908.1">
    <property type="nucleotide sequence ID" value="NZ_CTYB01000004.1"/>
</dbReference>
<dbReference type="SMR" id="A7X1I6"/>
<dbReference type="GeneID" id="98345539"/>
<dbReference type="KEGG" id="saw:SAHV_1214"/>
<dbReference type="HOGENOM" id="CLU_064548_7_1_9"/>
<dbReference type="GO" id="GO:1990904">
    <property type="term" value="C:ribonucleoprotein complex"/>
    <property type="evidence" value="ECO:0007669"/>
    <property type="project" value="UniProtKB-KW"/>
</dbReference>
<dbReference type="GO" id="GO:0005840">
    <property type="term" value="C:ribosome"/>
    <property type="evidence" value="ECO:0007669"/>
    <property type="project" value="UniProtKB-KW"/>
</dbReference>
<dbReference type="GO" id="GO:0003735">
    <property type="term" value="F:structural constituent of ribosome"/>
    <property type="evidence" value="ECO:0007669"/>
    <property type="project" value="InterPro"/>
</dbReference>
<dbReference type="GO" id="GO:0006412">
    <property type="term" value="P:translation"/>
    <property type="evidence" value="ECO:0007669"/>
    <property type="project" value="UniProtKB-UniRule"/>
</dbReference>
<dbReference type="Gene3D" id="2.30.170.40">
    <property type="entry name" value="Ribosomal protein L28/L24"/>
    <property type="match status" value="1"/>
</dbReference>
<dbReference type="HAMAP" id="MF_00373">
    <property type="entry name" value="Ribosomal_bL28"/>
    <property type="match status" value="1"/>
</dbReference>
<dbReference type="InterPro" id="IPR050096">
    <property type="entry name" value="Bacterial_rp_bL28"/>
</dbReference>
<dbReference type="InterPro" id="IPR026569">
    <property type="entry name" value="Ribosomal_bL28"/>
</dbReference>
<dbReference type="InterPro" id="IPR034704">
    <property type="entry name" value="Ribosomal_bL28/bL31-like_sf"/>
</dbReference>
<dbReference type="InterPro" id="IPR001383">
    <property type="entry name" value="Ribosomal_bL28_bact-type"/>
</dbReference>
<dbReference type="InterPro" id="IPR037147">
    <property type="entry name" value="Ribosomal_bL28_sf"/>
</dbReference>
<dbReference type="NCBIfam" id="TIGR00009">
    <property type="entry name" value="L28"/>
    <property type="match status" value="1"/>
</dbReference>
<dbReference type="PANTHER" id="PTHR39080">
    <property type="entry name" value="50S RIBOSOMAL PROTEIN L28"/>
    <property type="match status" value="1"/>
</dbReference>
<dbReference type="PANTHER" id="PTHR39080:SF1">
    <property type="entry name" value="LARGE RIBOSOMAL SUBUNIT PROTEIN BL28A"/>
    <property type="match status" value="1"/>
</dbReference>
<dbReference type="Pfam" id="PF00830">
    <property type="entry name" value="Ribosomal_L28"/>
    <property type="match status" value="1"/>
</dbReference>
<dbReference type="SUPFAM" id="SSF143800">
    <property type="entry name" value="L28p-like"/>
    <property type="match status" value="1"/>
</dbReference>
<gene>
    <name evidence="1" type="primary">rpmB</name>
    <name type="ordered locus">SAHV_1214</name>
</gene>
<keyword id="KW-0687">Ribonucleoprotein</keyword>
<keyword id="KW-0689">Ribosomal protein</keyword>
<organism>
    <name type="scientific">Staphylococcus aureus (strain Mu3 / ATCC 700698)</name>
    <dbReference type="NCBI Taxonomy" id="418127"/>
    <lineage>
        <taxon>Bacteria</taxon>
        <taxon>Bacillati</taxon>
        <taxon>Bacillota</taxon>
        <taxon>Bacilli</taxon>
        <taxon>Bacillales</taxon>
        <taxon>Staphylococcaceae</taxon>
        <taxon>Staphylococcus</taxon>
    </lineage>
</organism>
<proteinExistence type="inferred from homology"/>
<protein>
    <recommendedName>
        <fullName evidence="1">Large ribosomal subunit protein bL28</fullName>
    </recommendedName>
    <alternativeName>
        <fullName evidence="3">50S ribosomal protein L28</fullName>
    </alternativeName>
</protein>
<name>RL28_STAA1</name>
<accession>A7X1I6</accession>
<comment type="similarity">
    <text evidence="1">Belongs to the bacterial ribosomal protein bL28 family.</text>
</comment>
<reference key="1">
    <citation type="journal article" date="2008" name="Antimicrob. Agents Chemother.">
        <title>Mutated response regulator graR is responsible for phenotypic conversion of Staphylococcus aureus from heterogeneous vancomycin-intermediate resistance to vancomycin-intermediate resistance.</title>
        <authorList>
            <person name="Neoh H.-M."/>
            <person name="Cui L."/>
            <person name="Yuzawa H."/>
            <person name="Takeuchi F."/>
            <person name="Matsuo M."/>
            <person name="Hiramatsu K."/>
        </authorList>
    </citation>
    <scope>NUCLEOTIDE SEQUENCE [LARGE SCALE GENOMIC DNA]</scope>
    <source>
        <strain>Mu3 / ATCC 700698</strain>
    </source>
</reference>
<evidence type="ECO:0000255" key="1">
    <source>
        <dbReference type="HAMAP-Rule" id="MF_00373"/>
    </source>
</evidence>
<evidence type="ECO:0000256" key="2">
    <source>
        <dbReference type="SAM" id="MobiDB-lite"/>
    </source>
</evidence>
<evidence type="ECO:0000305" key="3"/>